<name>Y3714_MYCGI</name>
<comment type="function">
    <text evidence="1">Displays ATPase and GTPase activities.</text>
</comment>
<comment type="similarity">
    <text evidence="1">Belongs to the RapZ-like family.</text>
</comment>
<gene>
    <name type="ordered locus">Mflv_3714</name>
</gene>
<keyword id="KW-0067">ATP-binding</keyword>
<keyword id="KW-0342">GTP-binding</keyword>
<keyword id="KW-0547">Nucleotide-binding</keyword>
<evidence type="ECO:0000255" key="1">
    <source>
        <dbReference type="HAMAP-Rule" id="MF_00636"/>
    </source>
</evidence>
<evidence type="ECO:0000256" key="2">
    <source>
        <dbReference type="SAM" id="MobiDB-lite"/>
    </source>
</evidence>
<accession>A4TC20</accession>
<sequence length="327" mass="35699">MTRQGMRDDLRGEADSVVHDGTDDIDNENDIDNGIDNENGNGIDVVLVTGLSGAGRGTAAKVLEDLGWYVADNLPPELIAQMVDLGLAAGSRITQLAAVMDVRSRGFTGDLDWVRSELATRNIVPRVVFLEASDDILVRRYEQNRRSHPLQGNQTLAEGIAAERAMLAPVRASADLVIDTSALSVHGLRDSIERAFAAETVAHTNVTVESFGYKYGLPMDADTVMDVRFLPNPHWIDRLRPHTGQNADVRDYVLGQPGADEFLDSYHQLLNVVIDGYRREGKRYMTVAIGCTGGKHRSVAMAEALAARLAGSDALTVRVLHRDLGRE</sequence>
<proteinExistence type="inferred from homology"/>
<feature type="chain" id="PRO_0000383266" description="Nucleotide-binding protein Mflv_3714">
    <location>
        <begin position="1"/>
        <end position="327"/>
    </location>
</feature>
<feature type="region of interest" description="Disordered" evidence="2">
    <location>
        <begin position="1"/>
        <end position="29"/>
    </location>
</feature>
<feature type="compositionally biased region" description="Basic and acidic residues" evidence="2">
    <location>
        <begin position="1"/>
        <end position="22"/>
    </location>
</feature>
<feature type="binding site" evidence="1">
    <location>
        <begin position="50"/>
        <end position="57"/>
    </location>
    <ligand>
        <name>ATP</name>
        <dbReference type="ChEBI" id="CHEBI:30616"/>
    </ligand>
</feature>
<feature type="binding site" evidence="1">
    <location>
        <begin position="101"/>
        <end position="104"/>
    </location>
    <ligand>
        <name>GTP</name>
        <dbReference type="ChEBI" id="CHEBI:37565"/>
    </ligand>
</feature>
<organism>
    <name type="scientific">Mycolicibacterium gilvum (strain PYR-GCK)</name>
    <name type="common">Mycobacterium gilvum (strain PYR-GCK)</name>
    <dbReference type="NCBI Taxonomy" id="350054"/>
    <lineage>
        <taxon>Bacteria</taxon>
        <taxon>Bacillati</taxon>
        <taxon>Actinomycetota</taxon>
        <taxon>Actinomycetes</taxon>
        <taxon>Mycobacteriales</taxon>
        <taxon>Mycobacteriaceae</taxon>
        <taxon>Mycolicibacterium</taxon>
    </lineage>
</organism>
<reference key="1">
    <citation type="submission" date="2007-04" db="EMBL/GenBank/DDBJ databases">
        <title>Complete sequence of chromosome of Mycobacterium gilvum PYR-GCK.</title>
        <authorList>
            <consortium name="US DOE Joint Genome Institute"/>
            <person name="Copeland A."/>
            <person name="Lucas S."/>
            <person name="Lapidus A."/>
            <person name="Barry K."/>
            <person name="Detter J.C."/>
            <person name="Glavina del Rio T."/>
            <person name="Hammon N."/>
            <person name="Israni S."/>
            <person name="Dalin E."/>
            <person name="Tice H."/>
            <person name="Pitluck S."/>
            <person name="Chain P."/>
            <person name="Malfatti S."/>
            <person name="Shin M."/>
            <person name="Vergez L."/>
            <person name="Schmutz J."/>
            <person name="Larimer F."/>
            <person name="Land M."/>
            <person name="Hauser L."/>
            <person name="Kyrpides N."/>
            <person name="Mikhailova N."/>
            <person name="Miller C."/>
            <person name="Richardson P."/>
        </authorList>
    </citation>
    <scope>NUCLEOTIDE SEQUENCE [LARGE SCALE GENOMIC DNA]</scope>
    <source>
        <strain>PYR-GCK</strain>
    </source>
</reference>
<protein>
    <recommendedName>
        <fullName evidence="1">Nucleotide-binding protein Mflv_3714</fullName>
    </recommendedName>
</protein>
<dbReference type="EMBL" id="CP000656">
    <property type="protein sequence ID" value="ABP46186.1"/>
    <property type="molecule type" value="Genomic_DNA"/>
</dbReference>
<dbReference type="SMR" id="A4TC20"/>
<dbReference type="STRING" id="350054.Mflv_3714"/>
<dbReference type="KEGG" id="mgi:Mflv_3714"/>
<dbReference type="eggNOG" id="COG1660">
    <property type="taxonomic scope" value="Bacteria"/>
</dbReference>
<dbReference type="HOGENOM" id="CLU_059558_0_0_11"/>
<dbReference type="GO" id="GO:0005524">
    <property type="term" value="F:ATP binding"/>
    <property type="evidence" value="ECO:0007669"/>
    <property type="project" value="UniProtKB-UniRule"/>
</dbReference>
<dbReference type="GO" id="GO:0005525">
    <property type="term" value="F:GTP binding"/>
    <property type="evidence" value="ECO:0007669"/>
    <property type="project" value="UniProtKB-UniRule"/>
</dbReference>
<dbReference type="Gene3D" id="3.40.50.300">
    <property type="entry name" value="P-loop containing nucleotide triphosphate hydrolases"/>
    <property type="match status" value="1"/>
</dbReference>
<dbReference type="HAMAP" id="MF_00636">
    <property type="entry name" value="RapZ_like"/>
    <property type="match status" value="1"/>
</dbReference>
<dbReference type="InterPro" id="IPR027417">
    <property type="entry name" value="P-loop_NTPase"/>
</dbReference>
<dbReference type="InterPro" id="IPR005337">
    <property type="entry name" value="RapZ-like"/>
</dbReference>
<dbReference type="InterPro" id="IPR053930">
    <property type="entry name" value="RapZ-like_N"/>
</dbReference>
<dbReference type="InterPro" id="IPR053931">
    <property type="entry name" value="RapZ_C"/>
</dbReference>
<dbReference type="NCBIfam" id="NF003828">
    <property type="entry name" value="PRK05416.1"/>
    <property type="match status" value="1"/>
</dbReference>
<dbReference type="PANTHER" id="PTHR30448">
    <property type="entry name" value="RNASE ADAPTER PROTEIN RAPZ"/>
    <property type="match status" value="1"/>
</dbReference>
<dbReference type="PANTHER" id="PTHR30448:SF0">
    <property type="entry name" value="RNASE ADAPTER PROTEIN RAPZ"/>
    <property type="match status" value="1"/>
</dbReference>
<dbReference type="Pfam" id="PF22740">
    <property type="entry name" value="PapZ_C"/>
    <property type="match status" value="1"/>
</dbReference>
<dbReference type="Pfam" id="PF03668">
    <property type="entry name" value="RapZ-like_N"/>
    <property type="match status" value="1"/>
</dbReference>
<dbReference type="PIRSF" id="PIRSF005052">
    <property type="entry name" value="P-loopkin"/>
    <property type="match status" value="1"/>
</dbReference>
<dbReference type="SUPFAM" id="SSF52540">
    <property type="entry name" value="P-loop containing nucleoside triphosphate hydrolases"/>
    <property type="match status" value="1"/>
</dbReference>